<name>Y1225_LYSSC</name>
<sequence length="127" mass="14965">MRKIYTIETSNFEQDQLHFSLNDNEVNLQLKPAGQLIADSDDFAFIYLLDAGEDYHYLRFPPSSWENLVHILQKKKDPILRINDEAIELINFYDELEMLVYNIEGNYNYGAEFVQTVEQHFKAILAE</sequence>
<protein>
    <recommendedName>
        <fullName evidence="1">UPF0738 protein Bsph_1225</fullName>
    </recommendedName>
</protein>
<organism>
    <name type="scientific">Lysinibacillus sphaericus (strain C3-41)</name>
    <dbReference type="NCBI Taxonomy" id="444177"/>
    <lineage>
        <taxon>Bacteria</taxon>
        <taxon>Bacillati</taxon>
        <taxon>Bacillota</taxon>
        <taxon>Bacilli</taxon>
        <taxon>Bacillales</taxon>
        <taxon>Bacillaceae</taxon>
        <taxon>Lysinibacillus</taxon>
    </lineage>
</organism>
<reference key="1">
    <citation type="journal article" date="2008" name="J. Bacteriol.">
        <title>Complete genome sequence of the mosquitocidal bacterium Bacillus sphaericus C3-41 and comparison with those of closely related Bacillus species.</title>
        <authorList>
            <person name="Hu X."/>
            <person name="Fan W."/>
            <person name="Han B."/>
            <person name="Liu H."/>
            <person name="Zheng D."/>
            <person name="Li Q."/>
            <person name="Dong W."/>
            <person name="Yan J."/>
            <person name="Gao M."/>
            <person name="Berry C."/>
            <person name="Yuan Z."/>
        </authorList>
    </citation>
    <scope>NUCLEOTIDE SEQUENCE [LARGE SCALE GENOMIC DNA]</scope>
    <source>
        <strain>C3-41</strain>
    </source>
</reference>
<evidence type="ECO:0000255" key="1">
    <source>
        <dbReference type="HAMAP-Rule" id="MF_01861"/>
    </source>
</evidence>
<dbReference type="EMBL" id="CP000817">
    <property type="protein sequence ID" value="ACA38833.1"/>
    <property type="molecule type" value="Genomic_DNA"/>
</dbReference>
<dbReference type="RefSeq" id="WP_012292962.1">
    <property type="nucleotide sequence ID" value="NC_010382.1"/>
</dbReference>
<dbReference type="EnsemblBacteria" id="ACA38833">
    <property type="protein sequence ID" value="ACA38833"/>
    <property type="gene ID" value="Bsph_1225"/>
</dbReference>
<dbReference type="KEGG" id="lsp:Bsph_1225"/>
<dbReference type="HOGENOM" id="CLU_142282_0_0_9"/>
<dbReference type="Proteomes" id="UP000002164">
    <property type="component" value="Chromosome"/>
</dbReference>
<dbReference type="HAMAP" id="MF_01861">
    <property type="entry name" value="UPF0738"/>
    <property type="match status" value="1"/>
</dbReference>
<dbReference type="InterPro" id="IPR020908">
    <property type="entry name" value="UPF0738"/>
</dbReference>
<dbReference type="Pfam" id="PF19785">
    <property type="entry name" value="UPF0738"/>
    <property type="match status" value="1"/>
</dbReference>
<proteinExistence type="inferred from homology"/>
<comment type="similarity">
    <text evidence="1">Belongs to the UPF0738 family.</text>
</comment>
<accession>B1HNY1</accession>
<feature type="chain" id="PRO_0000369656" description="UPF0738 protein Bsph_1225">
    <location>
        <begin position="1"/>
        <end position="127"/>
    </location>
</feature>
<gene>
    <name type="ordered locus">Bsph_1225</name>
</gene>